<comment type="function">
    <text evidence="1">Peptide chain release factor 1 directs the termination of translation in response to the peptide chain termination codons UAG and UAA.</text>
</comment>
<comment type="subcellular location">
    <subcellularLocation>
        <location evidence="1">Cytoplasm</location>
    </subcellularLocation>
</comment>
<comment type="PTM">
    <text evidence="1">Methylated by PrmC. Methylation increases the termination efficiency of RF1.</text>
</comment>
<comment type="similarity">
    <text evidence="1">Belongs to the prokaryotic/mitochondrial release factor family.</text>
</comment>
<evidence type="ECO:0000255" key="1">
    <source>
        <dbReference type="HAMAP-Rule" id="MF_00093"/>
    </source>
</evidence>
<evidence type="ECO:0000256" key="2">
    <source>
        <dbReference type="SAM" id="MobiDB-lite"/>
    </source>
</evidence>
<reference key="1">
    <citation type="journal article" date="2010" name="Stand. Genomic Sci.">
        <title>Complete genome sequence of Rhizobium leguminosarum bv trifolii strain WSM2304, an effective microsymbiont of the South American clover Trifolium polymorphum.</title>
        <authorList>
            <person name="Reeve W."/>
            <person name="O'Hara G."/>
            <person name="Chain P."/>
            <person name="Ardley J."/>
            <person name="Brau L."/>
            <person name="Nandesena K."/>
            <person name="Tiwari R."/>
            <person name="Malfatti S."/>
            <person name="Kiss H."/>
            <person name="Lapidus A."/>
            <person name="Copeland A."/>
            <person name="Nolan M."/>
            <person name="Land M."/>
            <person name="Ivanova N."/>
            <person name="Mavromatis K."/>
            <person name="Markowitz V."/>
            <person name="Kyrpides N."/>
            <person name="Melino V."/>
            <person name="Denton M."/>
            <person name="Yates R."/>
            <person name="Howieson J."/>
        </authorList>
    </citation>
    <scope>NUCLEOTIDE SEQUENCE [LARGE SCALE GENOMIC DNA]</scope>
    <source>
        <strain>WSM2304</strain>
    </source>
</reference>
<organism>
    <name type="scientific">Rhizobium leguminosarum bv. trifolii (strain WSM2304)</name>
    <dbReference type="NCBI Taxonomy" id="395492"/>
    <lineage>
        <taxon>Bacteria</taxon>
        <taxon>Pseudomonadati</taxon>
        <taxon>Pseudomonadota</taxon>
        <taxon>Alphaproteobacteria</taxon>
        <taxon>Hyphomicrobiales</taxon>
        <taxon>Rhizobiaceae</taxon>
        <taxon>Rhizobium/Agrobacterium group</taxon>
        <taxon>Rhizobium</taxon>
    </lineage>
</organism>
<gene>
    <name evidence="1" type="primary">prfA</name>
    <name type="ordered locus">Rleg2_3524</name>
</gene>
<dbReference type="EMBL" id="CP001191">
    <property type="protein sequence ID" value="ACI56791.1"/>
    <property type="molecule type" value="Genomic_DNA"/>
</dbReference>
<dbReference type="RefSeq" id="WP_012559093.1">
    <property type="nucleotide sequence ID" value="NC_011369.1"/>
</dbReference>
<dbReference type="SMR" id="B5ZRR4"/>
<dbReference type="STRING" id="395492.Rleg2_3524"/>
<dbReference type="KEGG" id="rlt:Rleg2_3524"/>
<dbReference type="eggNOG" id="COG0216">
    <property type="taxonomic scope" value="Bacteria"/>
</dbReference>
<dbReference type="HOGENOM" id="CLU_036856_0_1_5"/>
<dbReference type="Proteomes" id="UP000008330">
    <property type="component" value="Chromosome"/>
</dbReference>
<dbReference type="GO" id="GO:0005737">
    <property type="term" value="C:cytoplasm"/>
    <property type="evidence" value="ECO:0007669"/>
    <property type="project" value="UniProtKB-SubCell"/>
</dbReference>
<dbReference type="GO" id="GO:0016149">
    <property type="term" value="F:translation release factor activity, codon specific"/>
    <property type="evidence" value="ECO:0007669"/>
    <property type="project" value="UniProtKB-UniRule"/>
</dbReference>
<dbReference type="FunFam" id="3.30.160.20:FF:000004">
    <property type="entry name" value="Peptide chain release factor 1"/>
    <property type="match status" value="1"/>
</dbReference>
<dbReference type="FunFam" id="3.30.70.1660:FF:000002">
    <property type="entry name" value="Peptide chain release factor 1"/>
    <property type="match status" value="1"/>
</dbReference>
<dbReference type="FunFam" id="3.30.70.1660:FF:000004">
    <property type="entry name" value="Peptide chain release factor 1"/>
    <property type="match status" value="1"/>
</dbReference>
<dbReference type="Gene3D" id="3.30.160.20">
    <property type="match status" value="1"/>
</dbReference>
<dbReference type="Gene3D" id="3.30.70.1660">
    <property type="match status" value="1"/>
</dbReference>
<dbReference type="Gene3D" id="6.10.140.1950">
    <property type="match status" value="1"/>
</dbReference>
<dbReference type="HAMAP" id="MF_00093">
    <property type="entry name" value="Rel_fac_1"/>
    <property type="match status" value="1"/>
</dbReference>
<dbReference type="InterPro" id="IPR005139">
    <property type="entry name" value="PCRF"/>
</dbReference>
<dbReference type="InterPro" id="IPR000352">
    <property type="entry name" value="Pep_chain_release_fac_I"/>
</dbReference>
<dbReference type="InterPro" id="IPR045853">
    <property type="entry name" value="Pep_chain_release_fac_I_sf"/>
</dbReference>
<dbReference type="InterPro" id="IPR050057">
    <property type="entry name" value="Prokaryotic/Mito_RF"/>
</dbReference>
<dbReference type="InterPro" id="IPR004373">
    <property type="entry name" value="RF-1"/>
</dbReference>
<dbReference type="NCBIfam" id="TIGR00019">
    <property type="entry name" value="prfA"/>
    <property type="match status" value="1"/>
</dbReference>
<dbReference type="NCBIfam" id="NF001859">
    <property type="entry name" value="PRK00591.1"/>
    <property type="match status" value="1"/>
</dbReference>
<dbReference type="PANTHER" id="PTHR43804">
    <property type="entry name" value="LD18447P"/>
    <property type="match status" value="1"/>
</dbReference>
<dbReference type="PANTHER" id="PTHR43804:SF7">
    <property type="entry name" value="LD18447P"/>
    <property type="match status" value="1"/>
</dbReference>
<dbReference type="Pfam" id="PF03462">
    <property type="entry name" value="PCRF"/>
    <property type="match status" value="1"/>
</dbReference>
<dbReference type="Pfam" id="PF00472">
    <property type="entry name" value="RF-1"/>
    <property type="match status" value="1"/>
</dbReference>
<dbReference type="SMART" id="SM00937">
    <property type="entry name" value="PCRF"/>
    <property type="match status" value="1"/>
</dbReference>
<dbReference type="SUPFAM" id="SSF75620">
    <property type="entry name" value="Release factor"/>
    <property type="match status" value="1"/>
</dbReference>
<dbReference type="PROSITE" id="PS00745">
    <property type="entry name" value="RF_PROK_I"/>
    <property type="match status" value="1"/>
</dbReference>
<keyword id="KW-0963">Cytoplasm</keyword>
<keyword id="KW-0488">Methylation</keyword>
<keyword id="KW-0648">Protein biosynthesis</keyword>
<keyword id="KW-1185">Reference proteome</keyword>
<feature type="chain" id="PRO_1000093494" description="Peptide chain release factor 1">
    <location>
        <begin position="1"/>
        <end position="359"/>
    </location>
</feature>
<feature type="region of interest" description="Disordered" evidence="2">
    <location>
        <begin position="280"/>
        <end position="306"/>
    </location>
</feature>
<feature type="modified residue" description="N5-methylglutamine" evidence="1">
    <location>
        <position position="235"/>
    </location>
</feature>
<sequence length="359" mass="40007">MAKLPVEKMRELERRFGEIEARMSAGPAADVYVKLASEYSELQPVVTKIRAYEKAIAELADLETLLEDKSVDREMRDLAELELPEVKEQIEALEQEMQILLLPKDAADEKSAILEIRAGTGGSEAALFAGDLFRMYERFSAEKGWKVEVLSASEGEAGGYKEIIATITGRGVFAKLKFESGVHRVQRVPETEAGGRIHTSAATVAVLPEAEEIDIEIRPEDIRIDTMRSSGAGGQHVNTTDSAVRITHLPSGIVVTSSEKSQHQNRAKAMQVLRSRLYDAERQRADSERSADRKSQVGSGDRSERIRTYNFPQGRITDHRINLTLYKLDRMMEGEIEEVVDALMADYQASQLAQLGEQQ</sequence>
<proteinExistence type="inferred from homology"/>
<protein>
    <recommendedName>
        <fullName evidence="1">Peptide chain release factor 1</fullName>
        <shortName evidence="1">RF-1</shortName>
    </recommendedName>
</protein>
<name>RF1_RHILW</name>
<accession>B5ZRR4</accession>